<comment type="function">
    <text evidence="1">Transcription regulator that activates transcription by stimulating RNA polymerase (RNAP) recycling in case of stress conditions such as supercoiled DNA or high salt concentrations. Probably acts by releasing the RNAP, when it is trapped or immobilized on tightly supercoiled DNA. Does not activate transcription on linear DNA. Probably not involved in DNA repair.</text>
</comment>
<comment type="subunit">
    <text evidence="1">Interacts with the RNAP. Has a higher affinity for the core RNAP than for the holoenzyme. Its ATPase activity is stimulated by binding to RNAP.</text>
</comment>
<comment type="similarity">
    <text evidence="1">Belongs to the SNF2/RAD54 helicase family. RapA subfamily.</text>
</comment>
<protein>
    <recommendedName>
        <fullName evidence="1">RNA polymerase-associated protein RapA</fullName>
        <ecNumber evidence="1">3.6.4.-</ecNumber>
    </recommendedName>
    <alternativeName>
        <fullName evidence="1">ATP-dependent helicase HepA</fullName>
    </alternativeName>
</protein>
<reference key="1">
    <citation type="submission" date="2006-03" db="EMBL/GenBank/DDBJ databases">
        <title>Complete sequence of Shewanella denitrificans OS217.</title>
        <authorList>
            <consortium name="US DOE Joint Genome Institute"/>
            <person name="Copeland A."/>
            <person name="Lucas S."/>
            <person name="Lapidus A."/>
            <person name="Barry K."/>
            <person name="Detter J.C."/>
            <person name="Glavina del Rio T."/>
            <person name="Hammon N."/>
            <person name="Israni S."/>
            <person name="Dalin E."/>
            <person name="Tice H."/>
            <person name="Pitluck S."/>
            <person name="Brettin T."/>
            <person name="Bruce D."/>
            <person name="Han C."/>
            <person name="Tapia R."/>
            <person name="Gilna P."/>
            <person name="Kiss H."/>
            <person name="Schmutz J."/>
            <person name="Larimer F."/>
            <person name="Land M."/>
            <person name="Hauser L."/>
            <person name="Kyrpides N."/>
            <person name="Lykidis A."/>
            <person name="Richardson P."/>
        </authorList>
    </citation>
    <scope>NUCLEOTIDE SEQUENCE [LARGE SCALE GENOMIC DNA]</scope>
    <source>
        <strain>OS217 / ATCC BAA-1090 / DSM 15013</strain>
    </source>
</reference>
<organism>
    <name type="scientific">Shewanella denitrificans (strain OS217 / ATCC BAA-1090 / DSM 15013)</name>
    <dbReference type="NCBI Taxonomy" id="318161"/>
    <lineage>
        <taxon>Bacteria</taxon>
        <taxon>Pseudomonadati</taxon>
        <taxon>Pseudomonadota</taxon>
        <taxon>Gammaproteobacteria</taxon>
        <taxon>Alteromonadales</taxon>
        <taxon>Shewanellaceae</taxon>
        <taxon>Shewanella</taxon>
    </lineage>
</organism>
<keyword id="KW-0010">Activator</keyword>
<keyword id="KW-0067">ATP-binding</keyword>
<keyword id="KW-0238">DNA-binding</keyword>
<keyword id="KW-0347">Helicase</keyword>
<keyword id="KW-0378">Hydrolase</keyword>
<keyword id="KW-0547">Nucleotide-binding</keyword>
<keyword id="KW-1185">Reference proteome</keyword>
<keyword id="KW-0804">Transcription</keyword>
<keyword id="KW-0805">Transcription regulation</keyword>
<feature type="chain" id="PRO_1000088381" description="RNA polymerase-associated protein RapA">
    <location>
        <begin position="1"/>
        <end position="968"/>
    </location>
</feature>
<feature type="domain" description="Helicase ATP-binding" evidence="1">
    <location>
        <begin position="163"/>
        <end position="332"/>
    </location>
</feature>
<feature type="domain" description="Helicase C-terminal" evidence="1">
    <location>
        <begin position="491"/>
        <end position="641"/>
    </location>
</feature>
<feature type="short sequence motif" description="DEAH box">
    <location>
        <begin position="278"/>
        <end position="281"/>
    </location>
</feature>
<feature type="binding site" evidence="1">
    <location>
        <begin position="176"/>
        <end position="183"/>
    </location>
    <ligand>
        <name>ATP</name>
        <dbReference type="ChEBI" id="CHEBI:30616"/>
    </ligand>
</feature>
<accession>Q12RU8</accession>
<dbReference type="EC" id="3.6.4.-" evidence="1"/>
<dbReference type="EMBL" id="CP000302">
    <property type="protein sequence ID" value="ABE53828.1"/>
    <property type="molecule type" value="Genomic_DNA"/>
</dbReference>
<dbReference type="RefSeq" id="WP_011494994.1">
    <property type="nucleotide sequence ID" value="NC_007954.1"/>
</dbReference>
<dbReference type="SMR" id="Q12RU8"/>
<dbReference type="STRING" id="318161.Sden_0536"/>
<dbReference type="KEGG" id="sdn:Sden_0536"/>
<dbReference type="eggNOG" id="COG0553">
    <property type="taxonomic scope" value="Bacteria"/>
</dbReference>
<dbReference type="HOGENOM" id="CLU_011520_0_0_6"/>
<dbReference type="OrthoDB" id="9814088at2"/>
<dbReference type="Proteomes" id="UP000001982">
    <property type="component" value="Chromosome"/>
</dbReference>
<dbReference type="GO" id="GO:0005524">
    <property type="term" value="F:ATP binding"/>
    <property type="evidence" value="ECO:0007669"/>
    <property type="project" value="UniProtKB-UniRule"/>
</dbReference>
<dbReference type="GO" id="GO:0003677">
    <property type="term" value="F:DNA binding"/>
    <property type="evidence" value="ECO:0007669"/>
    <property type="project" value="UniProtKB-KW"/>
</dbReference>
<dbReference type="GO" id="GO:0004386">
    <property type="term" value="F:helicase activity"/>
    <property type="evidence" value="ECO:0007669"/>
    <property type="project" value="UniProtKB-UniRule"/>
</dbReference>
<dbReference type="GO" id="GO:0016817">
    <property type="term" value="F:hydrolase activity, acting on acid anhydrides"/>
    <property type="evidence" value="ECO:0007669"/>
    <property type="project" value="InterPro"/>
</dbReference>
<dbReference type="GO" id="GO:0006355">
    <property type="term" value="P:regulation of DNA-templated transcription"/>
    <property type="evidence" value="ECO:0007669"/>
    <property type="project" value="UniProtKB-UniRule"/>
</dbReference>
<dbReference type="CDD" id="cd18011">
    <property type="entry name" value="DEXDc_RapA"/>
    <property type="match status" value="1"/>
</dbReference>
<dbReference type="CDD" id="cd18793">
    <property type="entry name" value="SF2_C_SNF"/>
    <property type="match status" value="1"/>
</dbReference>
<dbReference type="Gene3D" id="2.30.30.140">
    <property type="match status" value="1"/>
</dbReference>
<dbReference type="Gene3D" id="2.30.30.930">
    <property type="match status" value="1"/>
</dbReference>
<dbReference type="Gene3D" id="3.30.360.80">
    <property type="match status" value="1"/>
</dbReference>
<dbReference type="Gene3D" id="6.10.140.1500">
    <property type="match status" value="1"/>
</dbReference>
<dbReference type="Gene3D" id="6.10.140.2230">
    <property type="match status" value="1"/>
</dbReference>
<dbReference type="Gene3D" id="3.40.50.300">
    <property type="entry name" value="P-loop containing nucleotide triphosphate hydrolases"/>
    <property type="match status" value="1"/>
</dbReference>
<dbReference type="Gene3D" id="3.40.50.10810">
    <property type="entry name" value="Tandem AAA-ATPase domain"/>
    <property type="match status" value="1"/>
</dbReference>
<dbReference type="HAMAP" id="MF_01821">
    <property type="entry name" value="Helicase_RapA"/>
    <property type="match status" value="1"/>
</dbReference>
<dbReference type="InterPro" id="IPR014001">
    <property type="entry name" value="Helicase_ATP-bd"/>
</dbReference>
<dbReference type="InterPro" id="IPR001650">
    <property type="entry name" value="Helicase_C-like"/>
</dbReference>
<dbReference type="InterPro" id="IPR023949">
    <property type="entry name" value="Helicase_RapA"/>
</dbReference>
<dbReference type="InterPro" id="IPR027417">
    <property type="entry name" value="P-loop_NTPase"/>
</dbReference>
<dbReference type="InterPro" id="IPR022737">
    <property type="entry name" value="RapA_C"/>
</dbReference>
<dbReference type="InterPro" id="IPR038718">
    <property type="entry name" value="SNF2-like_sf"/>
</dbReference>
<dbReference type="InterPro" id="IPR049730">
    <property type="entry name" value="SNF2/RAD54-like_C"/>
</dbReference>
<dbReference type="InterPro" id="IPR000330">
    <property type="entry name" value="SNF2_N"/>
</dbReference>
<dbReference type="InterPro" id="IPR040765">
    <property type="entry name" value="Tudor_1_RapA"/>
</dbReference>
<dbReference type="InterPro" id="IPR040766">
    <property type="entry name" value="Tudor_2_RapA"/>
</dbReference>
<dbReference type="NCBIfam" id="NF003426">
    <property type="entry name" value="PRK04914.1"/>
    <property type="match status" value="1"/>
</dbReference>
<dbReference type="PANTHER" id="PTHR45766">
    <property type="entry name" value="DNA ANNEALING HELICASE AND ENDONUCLEASE ZRANB3 FAMILY MEMBER"/>
    <property type="match status" value="1"/>
</dbReference>
<dbReference type="PANTHER" id="PTHR45766:SF6">
    <property type="entry name" value="SWI_SNF-RELATED MATRIX-ASSOCIATED ACTIN-DEPENDENT REGULATOR OF CHROMATIN SUBFAMILY A-LIKE PROTEIN 1"/>
    <property type="match status" value="1"/>
</dbReference>
<dbReference type="Pfam" id="PF00271">
    <property type="entry name" value="Helicase_C"/>
    <property type="match status" value="1"/>
</dbReference>
<dbReference type="Pfam" id="PF12137">
    <property type="entry name" value="RapA_C"/>
    <property type="match status" value="1"/>
</dbReference>
<dbReference type="Pfam" id="PF00176">
    <property type="entry name" value="SNF2-rel_dom"/>
    <property type="match status" value="1"/>
</dbReference>
<dbReference type="Pfam" id="PF18339">
    <property type="entry name" value="Tudor_1_RapA"/>
    <property type="match status" value="1"/>
</dbReference>
<dbReference type="Pfam" id="PF18337">
    <property type="entry name" value="Tudor_RapA"/>
    <property type="match status" value="1"/>
</dbReference>
<dbReference type="SMART" id="SM00487">
    <property type="entry name" value="DEXDc"/>
    <property type="match status" value="1"/>
</dbReference>
<dbReference type="SMART" id="SM00490">
    <property type="entry name" value="HELICc"/>
    <property type="match status" value="1"/>
</dbReference>
<dbReference type="SUPFAM" id="SSF52540">
    <property type="entry name" value="P-loop containing nucleoside triphosphate hydrolases"/>
    <property type="match status" value="2"/>
</dbReference>
<dbReference type="PROSITE" id="PS51192">
    <property type="entry name" value="HELICASE_ATP_BIND_1"/>
    <property type="match status" value="1"/>
</dbReference>
<dbReference type="PROSITE" id="PS51194">
    <property type="entry name" value="HELICASE_CTER"/>
    <property type="match status" value="1"/>
</dbReference>
<proteinExistence type="inferred from homology"/>
<evidence type="ECO:0000255" key="1">
    <source>
        <dbReference type="HAMAP-Rule" id="MF_01821"/>
    </source>
</evidence>
<gene>
    <name evidence="1" type="primary">rapA</name>
    <name type="ordered locus">Sden_0536</name>
</gene>
<sequence>MPFALGQRWISDTESELGLGTVVQVEGRMVTLLFPATGENRMFSRAEAPLTRVIFNPNDTVESHEGWSITVTEVVEKDQLVVYHGTHSETGETVSLRETLISHNIRFNKPQDRLFAGQIDRLDRFGIRYQCQLLRHKLASSDLLGLQGPRVGLIAHQQWIAHEVGRRYAPRVLLADEVGLGKTIEAGLIMHQQLLTGRAERILVIVPDTLRHQWLVEMLRRFNLRFSVFDEDRCVEAYADNDNPFYTEQLVICSLELLRKKKRLDQALDADWDLLVVDEAHHLEWSEDAPSRAYQVVEALSEVVPGVLLLTATPDQLGHQSHFARLRLLDPDRFYDYDAFLTEEQGYQAVAEAAEALSGEKKLNDSAINSLTELLSEKDIAPSIRLIQANEVDPEQQQAARDGLLQELLDRHGTGRVLYRNSRASVKGFPKRIFNPHPQAMPEQYVTAERVNAMMSGKKTPQAKALEALSPEKLYQAFESDSASWWKFDTRVDWLIAFLKSHRSKKVLIIASQAETALSLEEALRTREGILATVFHEGMSIIERDKAGAYFAQEDAGAQALICSEIGSEGRNFQFASHLVLFDLPLNPDLLEQRIGRLDRIGQKNDIQIHLPYLEGTAQERLMQWYHHGLNAFELTCPSGHVLFNEFAEELTQVLCEDDADAMTQLLNHTQHKYKELKQAMERGRDKLLEINSHGGARAAALIERLAQKDNDTHLVGSVIRLWDIIGVDQEDNGENTIVLRPSEHMLFPTYPGLPEDGVTVTFDRETALSRDDIAFISEEHPLVQTGLDLITGSETGTTSVAVLKNKALPAGTLFLELIYMADASAPKSSQLYRYLPPTPIRVLLDKNGNNLATKVDYNNFEKQLSAVNRHIASKLVNASQPLLHPLLAKGQEQAQQGLDALLVDARASMTSQLTAELERLEALKAVNPNIREEELEYVRNQMAELNGYLDASQLQLDAIRMVLVSHV</sequence>
<name>RAPA_SHEDO</name>